<dbReference type="EMBL" id="AP009377">
    <property type="protein sequence ID" value="BAG16690.1"/>
    <property type="molecule type" value="Genomic_DNA"/>
</dbReference>
<dbReference type="RefSeq" id="YP_001806692.1">
    <property type="nucleotide sequence ID" value="NC_010548.1"/>
</dbReference>
<dbReference type="SMR" id="B1VKH9"/>
<dbReference type="GeneID" id="6166627"/>
<dbReference type="KEGG" id="cjf:6166627"/>
<dbReference type="OrthoDB" id="1900203at2759"/>
<dbReference type="GO" id="GO:0009535">
    <property type="term" value="C:chloroplast thylakoid membrane"/>
    <property type="evidence" value="ECO:0007669"/>
    <property type="project" value="UniProtKB-SubCell"/>
</dbReference>
<dbReference type="GO" id="GO:0045259">
    <property type="term" value="C:proton-transporting ATP synthase complex"/>
    <property type="evidence" value="ECO:0007669"/>
    <property type="project" value="UniProtKB-KW"/>
</dbReference>
<dbReference type="GO" id="GO:0046933">
    <property type="term" value="F:proton-transporting ATP synthase activity, rotational mechanism"/>
    <property type="evidence" value="ECO:0007669"/>
    <property type="project" value="UniProtKB-UniRule"/>
</dbReference>
<dbReference type="CDD" id="cd06503">
    <property type="entry name" value="ATP-synt_Fo_b"/>
    <property type="match status" value="1"/>
</dbReference>
<dbReference type="HAMAP" id="MF_01398">
    <property type="entry name" value="ATP_synth_b_bprime"/>
    <property type="match status" value="1"/>
</dbReference>
<dbReference type="InterPro" id="IPR002146">
    <property type="entry name" value="ATP_synth_b/b'su_bac/chlpt"/>
</dbReference>
<dbReference type="PANTHER" id="PTHR34264">
    <property type="entry name" value="ATP SYNTHASE SUBUNIT B, CHLOROPLASTIC"/>
    <property type="match status" value="1"/>
</dbReference>
<dbReference type="PANTHER" id="PTHR34264:SF3">
    <property type="entry name" value="ATP SYNTHASE SUBUNIT B, CHLOROPLASTIC"/>
    <property type="match status" value="1"/>
</dbReference>
<dbReference type="Pfam" id="PF00430">
    <property type="entry name" value="ATP-synt_B"/>
    <property type="match status" value="1"/>
</dbReference>
<evidence type="ECO:0000255" key="1">
    <source>
        <dbReference type="HAMAP-Rule" id="MF_01398"/>
    </source>
</evidence>
<keyword id="KW-0066">ATP synthesis</keyword>
<keyword id="KW-0138">CF(0)</keyword>
<keyword id="KW-0150">Chloroplast</keyword>
<keyword id="KW-0375">Hydrogen ion transport</keyword>
<keyword id="KW-0406">Ion transport</keyword>
<keyword id="KW-0472">Membrane</keyword>
<keyword id="KW-0934">Plastid</keyword>
<keyword id="KW-0793">Thylakoid</keyword>
<keyword id="KW-0812">Transmembrane</keyword>
<keyword id="KW-1133">Transmembrane helix</keyword>
<keyword id="KW-0813">Transport</keyword>
<comment type="function">
    <text evidence="1">F(1)F(0) ATP synthase produces ATP from ADP in the presence of a proton or sodium gradient. F-type ATPases consist of two structural domains, F(1) containing the extramembraneous catalytic core and F(0) containing the membrane proton channel, linked together by a central stalk and a peripheral stalk. During catalysis, ATP synthesis in the catalytic domain of F(1) is coupled via a rotary mechanism of the central stalk subunits to proton translocation.</text>
</comment>
<comment type="function">
    <text evidence="1">Component of the F(0) channel, it forms part of the peripheral stalk, linking F(1) to F(0).</text>
</comment>
<comment type="subunit">
    <text evidence="1">F-type ATPases have 2 components, F(1) - the catalytic core - and F(0) - the membrane proton channel. F(1) has five subunits: alpha(3), beta(3), gamma(1), delta(1), epsilon(1). F(0) has four main subunits: a(1), b(1), b'(1) and c(10-14). The alpha and beta chains form an alternating ring which encloses part of the gamma chain. F(1) is attached to F(0) by a central stalk formed by the gamma and epsilon chains, while a peripheral stalk is formed by the delta, b and b' chains.</text>
</comment>
<comment type="subcellular location">
    <subcellularLocation>
        <location evidence="1">Plastid</location>
        <location evidence="1">Chloroplast thylakoid membrane</location>
        <topology evidence="1">Single-pass membrane protein</topology>
    </subcellularLocation>
</comment>
<comment type="miscellaneous">
    <text>In plastids the F-type ATPase is also known as CF(1)CF(0).</text>
</comment>
<comment type="similarity">
    <text evidence="1">Belongs to the ATPase B chain family.</text>
</comment>
<organism>
    <name type="scientific">Cryptomeria japonica</name>
    <name type="common">Japanese cedar</name>
    <name type="synonym">Cupressus japonica</name>
    <dbReference type="NCBI Taxonomy" id="3369"/>
    <lineage>
        <taxon>Eukaryota</taxon>
        <taxon>Viridiplantae</taxon>
        <taxon>Streptophyta</taxon>
        <taxon>Embryophyta</taxon>
        <taxon>Tracheophyta</taxon>
        <taxon>Spermatophyta</taxon>
        <taxon>Pinopsida</taxon>
        <taxon>Pinidae</taxon>
        <taxon>Conifers II</taxon>
        <taxon>Cupressales</taxon>
        <taxon>Cupressaceae</taxon>
        <taxon>Cryptomeria</taxon>
    </lineage>
</organism>
<reference key="1">
    <citation type="journal article" date="2008" name="BMC Plant Biol.">
        <title>Complete nucleotide sequence of the Cryptomeria japonica D. Don. chloroplast genome and comparative chloroplast genomics: diversified genomic structure of coniferous species.</title>
        <authorList>
            <person name="Hirao T."/>
            <person name="Watanabe A."/>
            <person name="Kurita M."/>
            <person name="Kondo T."/>
            <person name="Takata K."/>
        </authorList>
    </citation>
    <scope>NUCLEOTIDE SEQUENCE [LARGE SCALE GENOMIC DNA]</scope>
</reference>
<feature type="chain" id="PRO_0000368923" description="ATP synthase subunit b, chloroplastic">
    <location>
        <begin position="1"/>
        <end position="181"/>
    </location>
</feature>
<feature type="transmembrane region" description="Helical" evidence="1">
    <location>
        <begin position="28"/>
        <end position="50"/>
    </location>
</feature>
<protein>
    <recommendedName>
        <fullName evidence="1">ATP synthase subunit b, chloroplastic</fullName>
    </recommendedName>
    <alternativeName>
        <fullName evidence="1">ATP synthase F(0) sector subunit b</fullName>
    </alternativeName>
    <alternativeName>
        <fullName evidence="1">ATPase subunit I</fullName>
    </alternativeName>
</protein>
<accession>B1VKH9</accession>
<sequence length="181" mass="20509">MKNVTDSFISLSSAEGFGLNTNILETNIINLSVVLGVLIYFGKGVLSNLLDNRKQKISSTIQSSEELCKGAANQLEQARARLREVERRVREIRVNGYSQIQQEKNDLINVASINLKQLENLKNETIHLEQERVIELVQKQISYQAVQRALGTLNSRLNSELHLRTIEHNIDLLLAMKNITD</sequence>
<proteinExistence type="inferred from homology"/>
<gene>
    <name evidence="1" type="primary">atpF</name>
</gene>
<name>ATPF_CRYJA</name>
<geneLocation type="chloroplast"/>